<accession>Q7N9T4</accession>
<gene>
    <name evidence="1" type="primary">yihI</name>
    <name type="ordered locus">plu0229</name>
</gene>
<keyword id="KW-0343">GTPase activation</keyword>
<keyword id="KW-1185">Reference proteome</keyword>
<keyword id="KW-0690">Ribosome biogenesis</keyword>
<name>YIHI_PHOLL</name>
<feature type="chain" id="PRO_0000209589" description="Der GTPase-activating protein YihI">
    <location>
        <begin position="1"/>
        <end position="169"/>
    </location>
</feature>
<feature type="region of interest" description="Disordered" evidence="2">
    <location>
        <begin position="1"/>
        <end position="83"/>
    </location>
</feature>
<feature type="region of interest" description="Disordered" evidence="2">
    <location>
        <begin position="150"/>
        <end position="169"/>
    </location>
</feature>
<feature type="compositionally biased region" description="Basic and acidic residues" evidence="2">
    <location>
        <begin position="21"/>
        <end position="30"/>
    </location>
</feature>
<feature type="compositionally biased region" description="Basic residues" evidence="2">
    <location>
        <begin position="31"/>
        <end position="40"/>
    </location>
</feature>
<feature type="compositionally biased region" description="Basic and acidic residues" evidence="2">
    <location>
        <begin position="51"/>
        <end position="66"/>
    </location>
</feature>
<feature type="compositionally biased region" description="Basic and acidic residues" evidence="2">
    <location>
        <begin position="150"/>
        <end position="161"/>
    </location>
</feature>
<proteinExistence type="inferred from homology"/>
<sequence length="169" mass="19228">MNPLKKKAPAKVSASKQKRKNREELNAEGRARKREKKHRGNPPGNRNQEQSGDKHPSGKQQRDPRLGSKVPVPLIVGEQPTKPVVANKVETKPRLSPQEELAMLENDDRLDALLERLENGESLSKEEHAYVDTTLDRIDALMEELGIKLDEEEREEEKQDDIMQLLKGN</sequence>
<evidence type="ECO:0000255" key="1">
    <source>
        <dbReference type="HAMAP-Rule" id="MF_01058"/>
    </source>
</evidence>
<evidence type="ECO:0000256" key="2">
    <source>
        <dbReference type="SAM" id="MobiDB-lite"/>
    </source>
</evidence>
<reference key="1">
    <citation type="journal article" date="2003" name="Nat. Biotechnol.">
        <title>The genome sequence of the entomopathogenic bacterium Photorhabdus luminescens.</title>
        <authorList>
            <person name="Duchaud E."/>
            <person name="Rusniok C."/>
            <person name="Frangeul L."/>
            <person name="Buchrieser C."/>
            <person name="Givaudan A."/>
            <person name="Taourit S."/>
            <person name="Bocs S."/>
            <person name="Boursaux-Eude C."/>
            <person name="Chandler M."/>
            <person name="Charles J.-F."/>
            <person name="Dassa E."/>
            <person name="Derose R."/>
            <person name="Derzelle S."/>
            <person name="Freyssinet G."/>
            <person name="Gaudriault S."/>
            <person name="Medigue C."/>
            <person name="Lanois A."/>
            <person name="Powell K."/>
            <person name="Siguier P."/>
            <person name="Vincent R."/>
            <person name="Wingate V."/>
            <person name="Zouine M."/>
            <person name="Glaser P."/>
            <person name="Boemare N."/>
            <person name="Danchin A."/>
            <person name="Kunst F."/>
        </authorList>
    </citation>
    <scope>NUCLEOTIDE SEQUENCE [LARGE SCALE GENOMIC DNA]</scope>
    <source>
        <strain>DSM 15139 / CIP 105565 / TT01</strain>
    </source>
</reference>
<comment type="function">
    <text evidence="1">A GTPase-activating protein (GAP) that modifies Der/EngA GTPase function. May play a role in ribosome biogenesis.</text>
</comment>
<comment type="subunit">
    <text evidence="1">Interacts with Der.</text>
</comment>
<comment type="similarity">
    <text evidence="1">Belongs to the YihI family.</text>
</comment>
<organism>
    <name type="scientific">Photorhabdus laumondii subsp. laumondii (strain DSM 15139 / CIP 105565 / TT01)</name>
    <name type="common">Photorhabdus luminescens subsp. laumondii</name>
    <dbReference type="NCBI Taxonomy" id="243265"/>
    <lineage>
        <taxon>Bacteria</taxon>
        <taxon>Pseudomonadati</taxon>
        <taxon>Pseudomonadota</taxon>
        <taxon>Gammaproteobacteria</taxon>
        <taxon>Enterobacterales</taxon>
        <taxon>Morganellaceae</taxon>
        <taxon>Photorhabdus</taxon>
    </lineage>
</organism>
<dbReference type="EMBL" id="BX571859">
    <property type="protein sequence ID" value="CAE12524.1"/>
    <property type="molecule type" value="Genomic_DNA"/>
</dbReference>
<dbReference type="RefSeq" id="WP_011144628.1">
    <property type="nucleotide sequence ID" value="NC_005126.1"/>
</dbReference>
<dbReference type="SMR" id="Q7N9T4"/>
<dbReference type="STRING" id="243265.plu0229"/>
<dbReference type="GeneID" id="48846526"/>
<dbReference type="KEGG" id="plu:plu0229"/>
<dbReference type="eggNOG" id="COG3078">
    <property type="taxonomic scope" value="Bacteria"/>
</dbReference>
<dbReference type="HOGENOM" id="CLU_094104_2_0_6"/>
<dbReference type="OrthoDB" id="5677577at2"/>
<dbReference type="Proteomes" id="UP000002514">
    <property type="component" value="Chromosome"/>
</dbReference>
<dbReference type="GO" id="GO:0005096">
    <property type="term" value="F:GTPase activator activity"/>
    <property type="evidence" value="ECO:0007669"/>
    <property type="project" value="UniProtKB-KW"/>
</dbReference>
<dbReference type="GO" id="GO:0042254">
    <property type="term" value="P:ribosome biogenesis"/>
    <property type="evidence" value="ECO:0007669"/>
    <property type="project" value="UniProtKB-KW"/>
</dbReference>
<dbReference type="HAMAP" id="MF_01058">
    <property type="entry name" value="GAP_YihI"/>
    <property type="match status" value="1"/>
</dbReference>
<dbReference type="InterPro" id="IPR007336">
    <property type="entry name" value="YihI"/>
</dbReference>
<dbReference type="NCBIfam" id="NF003560">
    <property type="entry name" value="PRK05244.1-1"/>
    <property type="match status" value="1"/>
</dbReference>
<dbReference type="Pfam" id="PF04220">
    <property type="entry name" value="YihI"/>
    <property type="match status" value="1"/>
</dbReference>
<protein>
    <recommendedName>
        <fullName evidence="1">Der GTPase-activating protein YihI</fullName>
    </recommendedName>
</protein>